<organism>
    <name type="scientific">Serratia proteamaculans (strain 568)</name>
    <dbReference type="NCBI Taxonomy" id="399741"/>
    <lineage>
        <taxon>Bacteria</taxon>
        <taxon>Pseudomonadati</taxon>
        <taxon>Pseudomonadota</taxon>
        <taxon>Gammaproteobacteria</taxon>
        <taxon>Enterobacterales</taxon>
        <taxon>Yersiniaceae</taxon>
        <taxon>Serratia</taxon>
    </lineage>
</organism>
<name>MURI_SERP5</name>
<accession>A8GL72</accession>
<proteinExistence type="inferred from homology"/>
<keyword id="KW-0133">Cell shape</keyword>
<keyword id="KW-0961">Cell wall biogenesis/degradation</keyword>
<keyword id="KW-0413">Isomerase</keyword>
<keyword id="KW-0573">Peptidoglycan synthesis</keyword>
<comment type="function">
    <text evidence="1">Provides the (R)-glutamate required for cell wall biosynthesis.</text>
</comment>
<comment type="catalytic activity">
    <reaction evidence="1">
        <text>L-glutamate = D-glutamate</text>
        <dbReference type="Rhea" id="RHEA:12813"/>
        <dbReference type="ChEBI" id="CHEBI:29985"/>
        <dbReference type="ChEBI" id="CHEBI:29986"/>
        <dbReference type="EC" id="5.1.1.3"/>
    </reaction>
</comment>
<comment type="pathway">
    <text evidence="1">Cell wall biogenesis; peptidoglycan biosynthesis.</text>
</comment>
<comment type="similarity">
    <text evidence="1">Belongs to the aspartate/glutamate racemases family.</text>
</comment>
<evidence type="ECO:0000255" key="1">
    <source>
        <dbReference type="HAMAP-Rule" id="MF_00258"/>
    </source>
</evidence>
<sequence length="287" mass="31399">MATLLQEENTTSLEAIPSNTTAKTRPTVLVFDSGVGGLSVYQEVRQLLPDLHYIYAFDNVAFPYGEKSEEFIVERVLEIVSAVQQRHPLAIVIIACNTASTVSLPALRERFTFPVVGVVPAIKPAARLTANGVVGLLATRGTVQRTYTHELIARFATDCKIELLGSSELVELAEAKLHGEAVPLPTLKKILHPWLSMREPPDTVVLGCTHFPLLAEELMQVLPEGTRLIDSGAAIARRTAWLISTQENLVSTQEDNLAYCMALNEDTDALLPVLQGYGFKSLKKLPV</sequence>
<reference key="1">
    <citation type="submission" date="2007-09" db="EMBL/GenBank/DDBJ databases">
        <title>Complete sequence of chromosome of Serratia proteamaculans 568.</title>
        <authorList>
            <consortium name="US DOE Joint Genome Institute"/>
            <person name="Copeland A."/>
            <person name="Lucas S."/>
            <person name="Lapidus A."/>
            <person name="Barry K."/>
            <person name="Glavina del Rio T."/>
            <person name="Dalin E."/>
            <person name="Tice H."/>
            <person name="Pitluck S."/>
            <person name="Chain P."/>
            <person name="Malfatti S."/>
            <person name="Shin M."/>
            <person name="Vergez L."/>
            <person name="Schmutz J."/>
            <person name="Larimer F."/>
            <person name="Land M."/>
            <person name="Hauser L."/>
            <person name="Kyrpides N."/>
            <person name="Kim E."/>
            <person name="Taghavi S."/>
            <person name="Newman L."/>
            <person name="Vangronsveld J."/>
            <person name="van der Lelie D."/>
            <person name="Richardson P."/>
        </authorList>
    </citation>
    <scope>NUCLEOTIDE SEQUENCE [LARGE SCALE GENOMIC DNA]</scope>
    <source>
        <strain>568</strain>
    </source>
</reference>
<dbReference type="EC" id="5.1.1.3" evidence="1"/>
<dbReference type="EMBL" id="CP000826">
    <property type="protein sequence ID" value="ABV43862.1"/>
    <property type="molecule type" value="Genomic_DNA"/>
</dbReference>
<dbReference type="SMR" id="A8GL72"/>
<dbReference type="STRING" id="399741.Spro_4769"/>
<dbReference type="KEGG" id="spe:Spro_4769"/>
<dbReference type="eggNOG" id="COG0796">
    <property type="taxonomic scope" value="Bacteria"/>
</dbReference>
<dbReference type="HOGENOM" id="CLU_052344_2_0_6"/>
<dbReference type="OrthoDB" id="9801055at2"/>
<dbReference type="UniPathway" id="UPA00219"/>
<dbReference type="GO" id="GO:0008881">
    <property type="term" value="F:glutamate racemase activity"/>
    <property type="evidence" value="ECO:0007669"/>
    <property type="project" value="UniProtKB-UniRule"/>
</dbReference>
<dbReference type="GO" id="GO:0071555">
    <property type="term" value="P:cell wall organization"/>
    <property type="evidence" value="ECO:0007669"/>
    <property type="project" value="UniProtKB-KW"/>
</dbReference>
<dbReference type="GO" id="GO:0009252">
    <property type="term" value="P:peptidoglycan biosynthetic process"/>
    <property type="evidence" value="ECO:0007669"/>
    <property type="project" value="UniProtKB-UniRule"/>
</dbReference>
<dbReference type="GO" id="GO:0008360">
    <property type="term" value="P:regulation of cell shape"/>
    <property type="evidence" value="ECO:0007669"/>
    <property type="project" value="UniProtKB-KW"/>
</dbReference>
<dbReference type="FunFam" id="3.40.50.1860:FF:000002">
    <property type="entry name" value="Glutamate racemase"/>
    <property type="match status" value="1"/>
</dbReference>
<dbReference type="Gene3D" id="3.40.50.1860">
    <property type="match status" value="2"/>
</dbReference>
<dbReference type="HAMAP" id="MF_00258">
    <property type="entry name" value="Glu_racemase"/>
    <property type="match status" value="1"/>
</dbReference>
<dbReference type="InterPro" id="IPR015942">
    <property type="entry name" value="Asp/Glu/hydantoin_racemase"/>
</dbReference>
<dbReference type="InterPro" id="IPR001920">
    <property type="entry name" value="Asp/Glu_race"/>
</dbReference>
<dbReference type="InterPro" id="IPR018187">
    <property type="entry name" value="Asp/Glu_racemase_AS_1"/>
</dbReference>
<dbReference type="InterPro" id="IPR033134">
    <property type="entry name" value="Asp/Glu_racemase_AS_2"/>
</dbReference>
<dbReference type="InterPro" id="IPR004391">
    <property type="entry name" value="Glu_race"/>
</dbReference>
<dbReference type="NCBIfam" id="TIGR00067">
    <property type="entry name" value="glut_race"/>
    <property type="match status" value="1"/>
</dbReference>
<dbReference type="NCBIfam" id="NF002034">
    <property type="entry name" value="PRK00865.1-1"/>
    <property type="match status" value="1"/>
</dbReference>
<dbReference type="PANTHER" id="PTHR21198">
    <property type="entry name" value="GLUTAMATE RACEMASE"/>
    <property type="match status" value="1"/>
</dbReference>
<dbReference type="PANTHER" id="PTHR21198:SF2">
    <property type="entry name" value="GLUTAMATE RACEMASE"/>
    <property type="match status" value="1"/>
</dbReference>
<dbReference type="Pfam" id="PF01177">
    <property type="entry name" value="Asp_Glu_race"/>
    <property type="match status" value="1"/>
</dbReference>
<dbReference type="SUPFAM" id="SSF53681">
    <property type="entry name" value="Aspartate/glutamate racemase"/>
    <property type="match status" value="2"/>
</dbReference>
<dbReference type="PROSITE" id="PS00923">
    <property type="entry name" value="ASP_GLU_RACEMASE_1"/>
    <property type="match status" value="1"/>
</dbReference>
<dbReference type="PROSITE" id="PS00924">
    <property type="entry name" value="ASP_GLU_RACEMASE_2"/>
    <property type="match status" value="1"/>
</dbReference>
<gene>
    <name evidence="1" type="primary">murI</name>
    <name type="ordered locus">Spro_4769</name>
</gene>
<feature type="chain" id="PRO_1000059075" description="Glutamate racemase">
    <location>
        <begin position="1"/>
        <end position="287"/>
    </location>
</feature>
<feature type="active site" description="Proton donor/acceptor" evidence="1">
    <location>
        <position position="96"/>
    </location>
</feature>
<feature type="active site" description="Proton donor/acceptor" evidence="1">
    <location>
        <position position="208"/>
    </location>
</feature>
<feature type="binding site" evidence="1">
    <location>
        <begin position="32"/>
        <end position="33"/>
    </location>
    <ligand>
        <name>substrate</name>
    </ligand>
</feature>
<feature type="binding site" evidence="1">
    <location>
        <begin position="64"/>
        <end position="65"/>
    </location>
    <ligand>
        <name>substrate</name>
    </ligand>
</feature>
<feature type="binding site" evidence="1">
    <location>
        <begin position="97"/>
        <end position="98"/>
    </location>
    <ligand>
        <name>substrate</name>
    </ligand>
</feature>
<feature type="binding site" evidence="1">
    <location>
        <begin position="209"/>
        <end position="210"/>
    </location>
    <ligand>
        <name>substrate</name>
    </ligand>
</feature>
<protein>
    <recommendedName>
        <fullName evidence="1">Glutamate racemase</fullName>
        <ecNumber evidence="1">5.1.1.3</ecNumber>
    </recommendedName>
</protein>